<name>URE1_ALIFM</name>
<dbReference type="EC" id="3.5.1.5" evidence="1"/>
<dbReference type="EMBL" id="CP001139">
    <property type="protein sequence ID" value="ACH65737.1"/>
    <property type="molecule type" value="Genomic_DNA"/>
</dbReference>
<dbReference type="RefSeq" id="WP_012533253.1">
    <property type="nucleotide sequence ID" value="NC_011184.1"/>
</dbReference>
<dbReference type="SMR" id="B5FBC6"/>
<dbReference type="MEROPS" id="M38.982"/>
<dbReference type="KEGG" id="vfm:VFMJ11_0691"/>
<dbReference type="HOGENOM" id="CLU_000980_0_0_6"/>
<dbReference type="UniPathway" id="UPA00258">
    <property type="reaction ID" value="UER00370"/>
</dbReference>
<dbReference type="Proteomes" id="UP000001857">
    <property type="component" value="Chromosome I"/>
</dbReference>
<dbReference type="GO" id="GO:0005737">
    <property type="term" value="C:cytoplasm"/>
    <property type="evidence" value="ECO:0007669"/>
    <property type="project" value="UniProtKB-SubCell"/>
</dbReference>
<dbReference type="GO" id="GO:0016151">
    <property type="term" value="F:nickel cation binding"/>
    <property type="evidence" value="ECO:0007669"/>
    <property type="project" value="UniProtKB-UniRule"/>
</dbReference>
<dbReference type="GO" id="GO:0009039">
    <property type="term" value="F:urease activity"/>
    <property type="evidence" value="ECO:0007669"/>
    <property type="project" value="UniProtKB-UniRule"/>
</dbReference>
<dbReference type="GO" id="GO:0043419">
    <property type="term" value="P:urea catabolic process"/>
    <property type="evidence" value="ECO:0007669"/>
    <property type="project" value="UniProtKB-UniRule"/>
</dbReference>
<dbReference type="CDD" id="cd00375">
    <property type="entry name" value="Urease_alpha"/>
    <property type="match status" value="1"/>
</dbReference>
<dbReference type="Gene3D" id="3.20.20.140">
    <property type="entry name" value="Metal-dependent hydrolases"/>
    <property type="match status" value="1"/>
</dbReference>
<dbReference type="Gene3D" id="2.30.40.10">
    <property type="entry name" value="Urease, subunit C, domain 1"/>
    <property type="match status" value="1"/>
</dbReference>
<dbReference type="HAMAP" id="MF_01953">
    <property type="entry name" value="Urease_alpha"/>
    <property type="match status" value="1"/>
</dbReference>
<dbReference type="InterPro" id="IPR006680">
    <property type="entry name" value="Amidohydro-rel"/>
</dbReference>
<dbReference type="InterPro" id="IPR011059">
    <property type="entry name" value="Metal-dep_hydrolase_composite"/>
</dbReference>
<dbReference type="InterPro" id="IPR032466">
    <property type="entry name" value="Metal_Hydrolase"/>
</dbReference>
<dbReference type="InterPro" id="IPR011612">
    <property type="entry name" value="Urease_alpha_N_dom"/>
</dbReference>
<dbReference type="InterPro" id="IPR050112">
    <property type="entry name" value="Urease_alpha_subunit"/>
</dbReference>
<dbReference type="InterPro" id="IPR017950">
    <property type="entry name" value="Urease_AS"/>
</dbReference>
<dbReference type="InterPro" id="IPR005848">
    <property type="entry name" value="Urease_asu"/>
</dbReference>
<dbReference type="InterPro" id="IPR017951">
    <property type="entry name" value="Urease_asu_c"/>
</dbReference>
<dbReference type="InterPro" id="IPR029754">
    <property type="entry name" value="Urease_Ni-bd"/>
</dbReference>
<dbReference type="NCBIfam" id="NF009685">
    <property type="entry name" value="PRK13206.1"/>
    <property type="match status" value="1"/>
</dbReference>
<dbReference type="NCBIfam" id="NF009686">
    <property type="entry name" value="PRK13207.1"/>
    <property type="match status" value="1"/>
</dbReference>
<dbReference type="NCBIfam" id="TIGR01792">
    <property type="entry name" value="urease_alph"/>
    <property type="match status" value="1"/>
</dbReference>
<dbReference type="PANTHER" id="PTHR43440">
    <property type="entry name" value="UREASE"/>
    <property type="match status" value="1"/>
</dbReference>
<dbReference type="PANTHER" id="PTHR43440:SF1">
    <property type="entry name" value="UREASE"/>
    <property type="match status" value="1"/>
</dbReference>
<dbReference type="Pfam" id="PF01979">
    <property type="entry name" value="Amidohydro_1"/>
    <property type="match status" value="1"/>
</dbReference>
<dbReference type="Pfam" id="PF00449">
    <property type="entry name" value="Urease_alpha"/>
    <property type="match status" value="1"/>
</dbReference>
<dbReference type="PRINTS" id="PR01752">
    <property type="entry name" value="UREASE"/>
</dbReference>
<dbReference type="SUPFAM" id="SSF51338">
    <property type="entry name" value="Composite domain of metallo-dependent hydrolases"/>
    <property type="match status" value="2"/>
</dbReference>
<dbReference type="SUPFAM" id="SSF51556">
    <property type="entry name" value="Metallo-dependent hydrolases"/>
    <property type="match status" value="1"/>
</dbReference>
<dbReference type="PROSITE" id="PS01120">
    <property type="entry name" value="UREASE_1"/>
    <property type="match status" value="1"/>
</dbReference>
<dbReference type="PROSITE" id="PS00145">
    <property type="entry name" value="UREASE_2"/>
    <property type="match status" value="1"/>
</dbReference>
<dbReference type="PROSITE" id="PS51368">
    <property type="entry name" value="UREASE_3"/>
    <property type="match status" value="1"/>
</dbReference>
<feature type="chain" id="PRO_1000188897" description="Urease subunit alpha">
    <location>
        <begin position="1"/>
        <end position="567"/>
    </location>
</feature>
<feature type="domain" description="Urease" evidence="1">
    <location>
        <begin position="129"/>
        <end position="567"/>
    </location>
</feature>
<feature type="active site" description="Proton donor" evidence="1">
    <location>
        <position position="320"/>
    </location>
</feature>
<feature type="binding site" evidence="1">
    <location>
        <position position="134"/>
    </location>
    <ligand>
        <name>Ni(2+)</name>
        <dbReference type="ChEBI" id="CHEBI:49786"/>
        <label>1</label>
    </ligand>
</feature>
<feature type="binding site" evidence="1">
    <location>
        <position position="136"/>
    </location>
    <ligand>
        <name>Ni(2+)</name>
        <dbReference type="ChEBI" id="CHEBI:49786"/>
        <label>1</label>
    </ligand>
</feature>
<feature type="binding site" description="via carbamate group" evidence="1">
    <location>
        <position position="217"/>
    </location>
    <ligand>
        <name>Ni(2+)</name>
        <dbReference type="ChEBI" id="CHEBI:49786"/>
        <label>1</label>
    </ligand>
</feature>
<feature type="binding site" description="via carbamate group" evidence="1">
    <location>
        <position position="217"/>
    </location>
    <ligand>
        <name>Ni(2+)</name>
        <dbReference type="ChEBI" id="CHEBI:49786"/>
        <label>2</label>
    </ligand>
</feature>
<feature type="binding site" evidence="1">
    <location>
        <position position="219"/>
    </location>
    <ligand>
        <name>substrate</name>
    </ligand>
</feature>
<feature type="binding site" evidence="1">
    <location>
        <position position="246"/>
    </location>
    <ligand>
        <name>Ni(2+)</name>
        <dbReference type="ChEBI" id="CHEBI:49786"/>
        <label>2</label>
    </ligand>
</feature>
<feature type="binding site" evidence="1">
    <location>
        <position position="272"/>
    </location>
    <ligand>
        <name>Ni(2+)</name>
        <dbReference type="ChEBI" id="CHEBI:49786"/>
        <label>2</label>
    </ligand>
</feature>
<feature type="binding site" evidence="1">
    <location>
        <position position="360"/>
    </location>
    <ligand>
        <name>Ni(2+)</name>
        <dbReference type="ChEBI" id="CHEBI:49786"/>
        <label>1</label>
    </ligand>
</feature>
<feature type="modified residue" description="N6-carboxylysine" evidence="1">
    <location>
        <position position="217"/>
    </location>
</feature>
<proteinExistence type="inferred from homology"/>
<gene>
    <name evidence="1" type="primary">ureC</name>
    <name type="ordered locus">VFMJ11_0691</name>
</gene>
<reference key="1">
    <citation type="submission" date="2008-08" db="EMBL/GenBank/DDBJ databases">
        <title>Complete sequence of Vibrio fischeri strain MJ11.</title>
        <authorList>
            <person name="Mandel M.J."/>
            <person name="Stabb E.V."/>
            <person name="Ruby E.G."/>
            <person name="Ferriera S."/>
            <person name="Johnson J."/>
            <person name="Kravitz S."/>
            <person name="Beeson K."/>
            <person name="Sutton G."/>
            <person name="Rogers Y.-H."/>
            <person name="Friedman R."/>
            <person name="Frazier M."/>
            <person name="Venter J.C."/>
        </authorList>
    </citation>
    <scope>NUCLEOTIDE SEQUENCE [LARGE SCALE GENOMIC DNA]</scope>
    <source>
        <strain>MJ11</strain>
    </source>
</reference>
<comment type="catalytic activity">
    <reaction evidence="1">
        <text>urea + 2 H2O + H(+) = hydrogencarbonate + 2 NH4(+)</text>
        <dbReference type="Rhea" id="RHEA:20557"/>
        <dbReference type="ChEBI" id="CHEBI:15377"/>
        <dbReference type="ChEBI" id="CHEBI:15378"/>
        <dbReference type="ChEBI" id="CHEBI:16199"/>
        <dbReference type="ChEBI" id="CHEBI:17544"/>
        <dbReference type="ChEBI" id="CHEBI:28938"/>
        <dbReference type="EC" id="3.5.1.5"/>
    </reaction>
</comment>
<comment type="cofactor">
    <cofactor evidence="1">
        <name>Ni cation</name>
        <dbReference type="ChEBI" id="CHEBI:25516"/>
    </cofactor>
    <text evidence="1">Binds 2 nickel ions per subunit.</text>
</comment>
<comment type="pathway">
    <text evidence="1">Nitrogen metabolism; urea degradation; CO(2) and NH(3) from urea (urease route): step 1/1.</text>
</comment>
<comment type="subunit">
    <text evidence="1">Heterotrimer of UreA (gamma), UreB (beta) and UreC (alpha) subunits. Three heterotrimers associate to form the active enzyme.</text>
</comment>
<comment type="subcellular location">
    <subcellularLocation>
        <location evidence="1">Cytoplasm</location>
    </subcellularLocation>
</comment>
<comment type="PTM">
    <text evidence="1">Carboxylation allows a single lysine to coordinate two nickel ions.</text>
</comment>
<comment type="similarity">
    <text evidence="1">Belongs to the metallo-dependent hydrolases superfamily. Urease alpha subunit family.</text>
</comment>
<evidence type="ECO:0000255" key="1">
    <source>
        <dbReference type="HAMAP-Rule" id="MF_01953"/>
    </source>
</evidence>
<accession>B5FBC6</accession>
<sequence>MAHISRTAYANMFGPTTGDRLRLADTELFLEVEKDFTTYGEEVKFGGGKVIRDGMGQSQVVNSECVDVVITNALILDHWGIVKADIGIKDGRIFGIGKAGNPDVQPNVDIVVGPATEVVAGEGKIITAGGVDTHIHFICPQQAEEGLTSGVTTFIGGGTGPVAGTNATTVTPGIWNIHRMLEAVDDLPINVGLFGKGCVSKPEALREQIEAGAMGLKIHEDWGATPAAIHNCLNVADEMDIQIAIHSDTLNEGGFYEETVKAIGDRVIHVFHTEGAGGGHAPDVIKSVGEPNILPASTNPTMPYTINTVDEHLDMLMVCHHLDPSIPEDVAFAESRIRRETIAAEDILHDMGAISVMSSDSQAMGRVGEVIIRTWQCANKMKLQRGILEGDNEHNDNERIKRYVAKYTINPAIAHGISHEVGSVEKGKLADLVLWNPAFFGVKPALVMKSGLVAYAPMGDINAAIPTPQPVHYRPMFACYGKAKFKSSMIFLSQASIEAGVPEKLNLQSQIGEVKGCRNISKKSMIHNSYTPNIELDSQTYEVKADGVPLVCEPATELPMAQRYFLF</sequence>
<organism>
    <name type="scientific">Aliivibrio fischeri (strain MJ11)</name>
    <name type="common">Vibrio fischeri</name>
    <dbReference type="NCBI Taxonomy" id="388396"/>
    <lineage>
        <taxon>Bacteria</taxon>
        <taxon>Pseudomonadati</taxon>
        <taxon>Pseudomonadota</taxon>
        <taxon>Gammaproteobacteria</taxon>
        <taxon>Vibrionales</taxon>
        <taxon>Vibrionaceae</taxon>
        <taxon>Aliivibrio</taxon>
    </lineage>
</organism>
<keyword id="KW-0963">Cytoplasm</keyword>
<keyword id="KW-0378">Hydrolase</keyword>
<keyword id="KW-0479">Metal-binding</keyword>
<keyword id="KW-0533">Nickel</keyword>
<protein>
    <recommendedName>
        <fullName evidence="1">Urease subunit alpha</fullName>
        <ecNumber evidence="1">3.5.1.5</ecNumber>
    </recommendedName>
    <alternativeName>
        <fullName evidence="1">Urea amidohydrolase subunit alpha</fullName>
    </alternativeName>
</protein>